<organism>
    <name type="scientific">Cereibacter sphaeroides (strain ATCC 17025 / ATH 2.4.3)</name>
    <name type="common">Rhodobacter sphaeroides</name>
    <dbReference type="NCBI Taxonomy" id="349102"/>
    <lineage>
        <taxon>Bacteria</taxon>
        <taxon>Pseudomonadati</taxon>
        <taxon>Pseudomonadota</taxon>
        <taxon>Alphaproteobacteria</taxon>
        <taxon>Rhodobacterales</taxon>
        <taxon>Paracoccaceae</taxon>
        <taxon>Cereibacter</taxon>
    </lineage>
</organism>
<proteinExistence type="inferred from homology"/>
<keyword id="KW-0067">ATP-binding</keyword>
<keyword id="KW-0418">Kinase</keyword>
<keyword id="KW-0441">Lipid A biosynthesis</keyword>
<keyword id="KW-0444">Lipid biosynthesis</keyword>
<keyword id="KW-0443">Lipid metabolism</keyword>
<keyword id="KW-0547">Nucleotide-binding</keyword>
<keyword id="KW-0808">Transferase</keyword>
<name>LPXK_CERS5</name>
<sequence>MRPPAFWFTQPARPSVAARLLAPLGRAYAAATARRLRAEGHRAGVPVICIGNLNAGGTGKTPTAIALLQRLSDRGVAAHVVSRGYGGRLEGPVQVDPRRHRAAEVGDEPLLLAAFGPAWVARDRAAGVRAAEAAGAQAILLDDGFQNPSVVKDLSVVVVDAAVGFGNGRCLPAGPLREPVAEGLGRADLLLSIGEAEAQRRFAADWPALPVPRLTGRLATLQMGMDWQEARVLAFAGIGRPEKFFASLRAEGAVLLRAEALDDHQPLGEALMRRLEIEAMALGAQLVTTEKDAVRLPPSFRQKVLTLPVRLELDDWTALDAAFDRLGLRRTG</sequence>
<feature type="chain" id="PRO_0000340854" description="Tetraacyldisaccharide 4'-kinase">
    <location>
        <begin position="1"/>
        <end position="332"/>
    </location>
</feature>
<feature type="binding site" evidence="1">
    <location>
        <begin position="54"/>
        <end position="61"/>
    </location>
    <ligand>
        <name>ATP</name>
        <dbReference type="ChEBI" id="CHEBI:30616"/>
    </ligand>
</feature>
<dbReference type="EC" id="2.7.1.130" evidence="1"/>
<dbReference type="EMBL" id="CP000661">
    <property type="protein sequence ID" value="ABP68972.1"/>
    <property type="molecule type" value="Genomic_DNA"/>
</dbReference>
<dbReference type="SMR" id="A4WNK8"/>
<dbReference type="STRING" id="349102.Rsph17025_0060"/>
<dbReference type="KEGG" id="rsq:Rsph17025_0060"/>
<dbReference type="eggNOG" id="COG1663">
    <property type="taxonomic scope" value="Bacteria"/>
</dbReference>
<dbReference type="HOGENOM" id="CLU_038816_0_0_5"/>
<dbReference type="BioCyc" id="RSPH349102:G1G8M-59-MONOMER"/>
<dbReference type="UniPathway" id="UPA00359">
    <property type="reaction ID" value="UER00482"/>
</dbReference>
<dbReference type="GO" id="GO:0005886">
    <property type="term" value="C:plasma membrane"/>
    <property type="evidence" value="ECO:0007669"/>
    <property type="project" value="TreeGrafter"/>
</dbReference>
<dbReference type="GO" id="GO:0005524">
    <property type="term" value="F:ATP binding"/>
    <property type="evidence" value="ECO:0007669"/>
    <property type="project" value="UniProtKB-UniRule"/>
</dbReference>
<dbReference type="GO" id="GO:0009029">
    <property type="term" value="F:tetraacyldisaccharide 4'-kinase activity"/>
    <property type="evidence" value="ECO:0007669"/>
    <property type="project" value="UniProtKB-UniRule"/>
</dbReference>
<dbReference type="GO" id="GO:0009245">
    <property type="term" value="P:lipid A biosynthetic process"/>
    <property type="evidence" value="ECO:0007669"/>
    <property type="project" value="UniProtKB-UniRule"/>
</dbReference>
<dbReference type="GO" id="GO:0009244">
    <property type="term" value="P:lipopolysaccharide core region biosynthetic process"/>
    <property type="evidence" value="ECO:0007669"/>
    <property type="project" value="TreeGrafter"/>
</dbReference>
<dbReference type="HAMAP" id="MF_00409">
    <property type="entry name" value="LpxK"/>
    <property type="match status" value="1"/>
</dbReference>
<dbReference type="InterPro" id="IPR003758">
    <property type="entry name" value="LpxK"/>
</dbReference>
<dbReference type="InterPro" id="IPR027417">
    <property type="entry name" value="P-loop_NTPase"/>
</dbReference>
<dbReference type="NCBIfam" id="TIGR00682">
    <property type="entry name" value="lpxK"/>
    <property type="match status" value="1"/>
</dbReference>
<dbReference type="PANTHER" id="PTHR42724">
    <property type="entry name" value="TETRAACYLDISACCHARIDE 4'-KINASE"/>
    <property type="match status" value="1"/>
</dbReference>
<dbReference type="PANTHER" id="PTHR42724:SF1">
    <property type="entry name" value="TETRAACYLDISACCHARIDE 4'-KINASE, MITOCHONDRIAL-RELATED"/>
    <property type="match status" value="1"/>
</dbReference>
<dbReference type="Pfam" id="PF02606">
    <property type="entry name" value="LpxK"/>
    <property type="match status" value="1"/>
</dbReference>
<dbReference type="SUPFAM" id="SSF52540">
    <property type="entry name" value="P-loop containing nucleoside triphosphate hydrolases"/>
    <property type="match status" value="1"/>
</dbReference>
<protein>
    <recommendedName>
        <fullName evidence="1">Tetraacyldisaccharide 4'-kinase</fullName>
        <ecNumber evidence="1">2.7.1.130</ecNumber>
    </recommendedName>
    <alternativeName>
        <fullName evidence="1">Lipid A 4'-kinase</fullName>
    </alternativeName>
</protein>
<accession>A4WNK8</accession>
<gene>
    <name evidence="1" type="primary">lpxK</name>
    <name type="ordered locus">Rsph17025_0060</name>
</gene>
<comment type="function">
    <text evidence="1">Transfers the gamma-phosphate of ATP to the 4'-position of a tetraacyldisaccharide 1-phosphate intermediate (termed DS-1-P) to form tetraacyldisaccharide 1,4'-bis-phosphate (lipid IVA).</text>
</comment>
<comment type="catalytic activity">
    <reaction evidence="1">
        <text>a lipid A disaccharide + ATP = a lipid IVA + ADP + H(+)</text>
        <dbReference type="Rhea" id="RHEA:67840"/>
        <dbReference type="ChEBI" id="CHEBI:15378"/>
        <dbReference type="ChEBI" id="CHEBI:30616"/>
        <dbReference type="ChEBI" id="CHEBI:176343"/>
        <dbReference type="ChEBI" id="CHEBI:176425"/>
        <dbReference type="ChEBI" id="CHEBI:456216"/>
        <dbReference type="EC" id="2.7.1.130"/>
    </reaction>
</comment>
<comment type="pathway">
    <text evidence="1">Glycolipid biosynthesis; lipid IV(A) biosynthesis; lipid IV(A) from (3R)-3-hydroxytetradecanoyl-[acyl-carrier-protein] and UDP-N-acetyl-alpha-D-glucosamine: step 6/6.</text>
</comment>
<comment type="similarity">
    <text evidence="1">Belongs to the LpxK family.</text>
</comment>
<evidence type="ECO:0000255" key="1">
    <source>
        <dbReference type="HAMAP-Rule" id="MF_00409"/>
    </source>
</evidence>
<reference key="1">
    <citation type="submission" date="2007-04" db="EMBL/GenBank/DDBJ databases">
        <title>Complete sequence of chromosome of Rhodobacter sphaeroides ATCC 17025.</title>
        <authorList>
            <consortium name="US DOE Joint Genome Institute"/>
            <person name="Copeland A."/>
            <person name="Lucas S."/>
            <person name="Lapidus A."/>
            <person name="Barry K."/>
            <person name="Detter J.C."/>
            <person name="Glavina del Rio T."/>
            <person name="Hammon N."/>
            <person name="Israni S."/>
            <person name="Dalin E."/>
            <person name="Tice H."/>
            <person name="Pitluck S."/>
            <person name="Chertkov O."/>
            <person name="Brettin T."/>
            <person name="Bruce D."/>
            <person name="Han C."/>
            <person name="Schmutz J."/>
            <person name="Larimer F."/>
            <person name="Land M."/>
            <person name="Hauser L."/>
            <person name="Kyrpides N."/>
            <person name="Kim E."/>
            <person name="Richardson P."/>
            <person name="Mackenzie C."/>
            <person name="Choudhary M."/>
            <person name="Donohue T.J."/>
            <person name="Kaplan S."/>
        </authorList>
    </citation>
    <scope>NUCLEOTIDE SEQUENCE [LARGE SCALE GENOMIC DNA]</scope>
    <source>
        <strain>ATCC 17025 / ATH 2.4.3</strain>
    </source>
</reference>